<evidence type="ECO:0000250" key="1"/>
<evidence type="ECO:0000305" key="2"/>
<protein>
    <recommendedName>
        <fullName>Trehalose-phosphate phosphatase</fullName>
        <shortName>TPP</shortName>
        <ecNumber>3.1.3.12</ecNumber>
    </recommendedName>
    <alternativeName>
        <fullName>Trehalose-6-phosphate phosphatase</fullName>
    </alternativeName>
</protein>
<gene>
    <name type="primary">otsB</name>
    <name type="synonym">otsB2</name>
    <name type="ordered locus">MT3482</name>
</gene>
<accession>P9WFZ4</accession>
<accession>L0TCC3</accession>
<accession>O50401</accession>
<accession>Q7D5L8</accession>
<reference key="1">
    <citation type="journal article" date="2002" name="J. Bacteriol.">
        <title>Whole-genome comparison of Mycobacterium tuberculosis clinical and laboratory strains.</title>
        <authorList>
            <person name="Fleischmann R.D."/>
            <person name="Alland D."/>
            <person name="Eisen J.A."/>
            <person name="Carpenter L."/>
            <person name="White O."/>
            <person name="Peterson J.D."/>
            <person name="DeBoy R.T."/>
            <person name="Dodson R.J."/>
            <person name="Gwinn M.L."/>
            <person name="Haft D.H."/>
            <person name="Hickey E.K."/>
            <person name="Kolonay J.F."/>
            <person name="Nelson W.C."/>
            <person name="Umayam L.A."/>
            <person name="Ermolaeva M.D."/>
            <person name="Salzberg S.L."/>
            <person name="Delcher A."/>
            <person name="Utterback T.R."/>
            <person name="Weidman J.F."/>
            <person name="Khouri H.M."/>
            <person name="Gill J."/>
            <person name="Mikula A."/>
            <person name="Bishai W."/>
            <person name="Jacobs W.R. Jr."/>
            <person name="Venter J.C."/>
            <person name="Fraser C.M."/>
        </authorList>
    </citation>
    <scope>NUCLEOTIDE SEQUENCE [LARGE SCALE GENOMIC DNA]</scope>
    <source>
        <strain>CDC 1551 / Oshkosh</strain>
    </source>
</reference>
<proteinExistence type="inferred from homology"/>
<comment type="function">
    <text evidence="1">Removes the phosphate from trehalose 6-phosphate to produce free trehalose.</text>
</comment>
<comment type="catalytic activity">
    <reaction>
        <text>alpha,alpha-trehalose 6-phosphate + H2O = alpha,alpha-trehalose + phosphate</text>
        <dbReference type="Rhea" id="RHEA:23420"/>
        <dbReference type="ChEBI" id="CHEBI:15377"/>
        <dbReference type="ChEBI" id="CHEBI:16551"/>
        <dbReference type="ChEBI" id="CHEBI:43474"/>
        <dbReference type="ChEBI" id="CHEBI:58429"/>
        <dbReference type="EC" id="3.1.3.12"/>
    </reaction>
</comment>
<comment type="cofactor">
    <cofactor evidence="1">
        <name>Mn(2+)</name>
        <dbReference type="ChEBI" id="CHEBI:29035"/>
    </cofactor>
    <cofactor evidence="1">
        <name>Mg(2+)</name>
        <dbReference type="ChEBI" id="CHEBI:18420"/>
    </cofactor>
</comment>
<comment type="pathway">
    <text>Glycan biosynthesis; trehalose biosynthesis.</text>
</comment>
<comment type="similarity">
    <text evidence="2">Belongs to the trehalose phosphatase family.</text>
</comment>
<name>OTSB_MYCTO</name>
<keyword id="KW-0378">Hydrolase</keyword>
<keyword id="KW-0460">Magnesium</keyword>
<keyword id="KW-0464">Manganese</keyword>
<keyword id="KW-0479">Metal-binding</keyword>
<keyword id="KW-1185">Reference proteome</keyword>
<sequence>MRKLGPVTIDPRRHDAVLFDTTLDATQELVRQLQEVGVGTGVFGSGLDVPIVAAGRLAVRPGRCVVVSAHSAGVTAARESGFALIIGVDRTGCRDALRRDGADTVVTDLSEVSVRTGDRRMSQLPDALQALGLADGLVARQPAVFFDFDGTLSDIVEDPDAAWLAPGALEALQKLAARCPIAVLSGRDLADVTQRVGLPGIWYAGSHGFELTAPDGTHHQNDAAAAAIPVLKQAAAELRQQLGPFPGVVVEHKRFGVAVHYRNAARDRVGEVAAAVRTAEQRHALRVTTGREVIELRPDVDWDKGKTLLWVLDHLPHSGSAPLVPIYLGDDITDEDAFDVVGPHGVPIVVRHTDDGDRATAALFALDSPARVAEFTDRLARQLREAPLRAT</sequence>
<dbReference type="EC" id="3.1.3.12"/>
<dbReference type="EMBL" id="AE000516">
    <property type="protein sequence ID" value="AAK47819.1"/>
    <property type="molecule type" value="Genomic_DNA"/>
</dbReference>
<dbReference type="PIR" id="C70972">
    <property type="entry name" value="C70972"/>
</dbReference>
<dbReference type="RefSeq" id="WP_003417892.1">
    <property type="nucleotide sequence ID" value="NZ_KK341227.1"/>
</dbReference>
<dbReference type="SMR" id="P9WFZ4"/>
<dbReference type="KEGG" id="mtc:MT3482"/>
<dbReference type="PATRIC" id="fig|83331.31.peg.3739"/>
<dbReference type="HOGENOM" id="CLU_037265_4_1_11"/>
<dbReference type="UniPathway" id="UPA00299"/>
<dbReference type="Proteomes" id="UP000001020">
    <property type="component" value="Chromosome"/>
</dbReference>
<dbReference type="GO" id="GO:0046872">
    <property type="term" value="F:metal ion binding"/>
    <property type="evidence" value="ECO:0007669"/>
    <property type="project" value="UniProtKB-KW"/>
</dbReference>
<dbReference type="GO" id="GO:0004805">
    <property type="term" value="F:trehalose-phosphatase activity"/>
    <property type="evidence" value="ECO:0007669"/>
    <property type="project" value="UniProtKB-EC"/>
</dbReference>
<dbReference type="GO" id="GO:0005992">
    <property type="term" value="P:trehalose biosynthetic process"/>
    <property type="evidence" value="ECO:0007669"/>
    <property type="project" value="UniProtKB-UniPathway"/>
</dbReference>
<dbReference type="CDD" id="cd01627">
    <property type="entry name" value="HAD_TPP"/>
    <property type="match status" value="1"/>
</dbReference>
<dbReference type="FunFam" id="3.30.70.1020:FF:000007">
    <property type="entry name" value="Trehalose 6-phosphate phosphatase"/>
    <property type="match status" value="1"/>
</dbReference>
<dbReference type="Gene3D" id="3.40.50.1000">
    <property type="entry name" value="HAD superfamily/HAD-like"/>
    <property type="match status" value="2"/>
</dbReference>
<dbReference type="Gene3D" id="3.30.70.1020">
    <property type="entry name" value="Trehalose-6-phosphate phosphatase related protein, domain 2"/>
    <property type="match status" value="1"/>
</dbReference>
<dbReference type="InterPro" id="IPR036412">
    <property type="entry name" value="HAD-like_sf"/>
</dbReference>
<dbReference type="InterPro" id="IPR006379">
    <property type="entry name" value="HAD-SF_hydro_IIB"/>
</dbReference>
<dbReference type="InterPro" id="IPR023214">
    <property type="entry name" value="HAD_sf"/>
</dbReference>
<dbReference type="InterPro" id="IPR044651">
    <property type="entry name" value="OTSB-like"/>
</dbReference>
<dbReference type="InterPro" id="IPR003337">
    <property type="entry name" value="Trehalose_PPase"/>
</dbReference>
<dbReference type="NCBIfam" id="TIGR01484">
    <property type="entry name" value="HAD-SF-IIB"/>
    <property type="match status" value="1"/>
</dbReference>
<dbReference type="NCBIfam" id="TIGR00685">
    <property type="entry name" value="T6PP"/>
    <property type="match status" value="1"/>
</dbReference>
<dbReference type="PANTHER" id="PTHR43768">
    <property type="entry name" value="TREHALOSE 6-PHOSPHATE PHOSPHATASE"/>
    <property type="match status" value="1"/>
</dbReference>
<dbReference type="PANTHER" id="PTHR43768:SF3">
    <property type="entry name" value="TREHALOSE 6-PHOSPHATE PHOSPHATASE"/>
    <property type="match status" value="1"/>
</dbReference>
<dbReference type="Pfam" id="PF02358">
    <property type="entry name" value="Trehalose_PPase"/>
    <property type="match status" value="1"/>
</dbReference>
<dbReference type="SUPFAM" id="SSF56784">
    <property type="entry name" value="HAD-like"/>
    <property type="match status" value="2"/>
</dbReference>
<feature type="chain" id="PRO_0000428451" description="Trehalose-phosphate phosphatase">
    <location>
        <begin position="1"/>
        <end position="391"/>
    </location>
</feature>
<feature type="active site" description="Nucleophile" evidence="1">
    <location>
        <position position="147"/>
    </location>
</feature>
<feature type="binding site" evidence="1">
    <location>
        <begin position="147"/>
        <end position="149"/>
    </location>
    <ligand>
        <name>substrate</name>
    </ligand>
</feature>
<feature type="binding site" evidence="1">
    <location>
        <position position="147"/>
    </location>
    <ligand>
        <name>Mg(2+)</name>
        <dbReference type="ChEBI" id="CHEBI:18420"/>
    </ligand>
</feature>
<feature type="binding site" evidence="1">
    <location>
        <position position="149"/>
    </location>
    <ligand>
        <name>Mg(2+)</name>
        <dbReference type="ChEBI" id="CHEBI:18420"/>
    </ligand>
</feature>
<feature type="binding site" evidence="1">
    <location>
        <position position="330"/>
    </location>
    <ligand>
        <name>Mg(2+)</name>
        <dbReference type="ChEBI" id="CHEBI:18420"/>
    </ligand>
</feature>
<organism>
    <name type="scientific">Mycobacterium tuberculosis (strain CDC 1551 / Oshkosh)</name>
    <dbReference type="NCBI Taxonomy" id="83331"/>
    <lineage>
        <taxon>Bacteria</taxon>
        <taxon>Bacillati</taxon>
        <taxon>Actinomycetota</taxon>
        <taxon>Actinomycetes</taxon>
        <taxon>Mycobacteriales</taxon>
        <taxon>Mycobacteriaceae</taxon>
        <taxon>Mycobacterium</taxon>
        <taxon>Mycobacterium tuberculosis complex</taxon>
    </lineage>
</organism>